<keyword id="KW-0240">DNA-directed RNA polymerase</keyword>
<keyword id="KW-0548">Nucleotidyltransferase</keyword>
<keyword id="KW-1185">Reference proteome</keyword>
<keyword id="KW-0804">Transcription</keyword>
<keyword id="KW-0808">Transferase</keyword>
<gene>
    <name evidence="1" type="primary">rpoB</name>
    <name type="ordered locus">RSal33209_2186</name>
</gene>
<sequence length="1175" mass="129264">MEGSLLVASSASNNETANNVESTDGATRRISFAKIHEPLDVPNLLALQTESFDWLVGNGRWQDRMQKAVDAGDESVATTSGLSDIFEEISPIEDFQGTMSLSFSEPEFADPKYTMAECKDRDATFSAPLYVKAEFMNNNTGEIKQQTVFMGDFPLMTEKGTFVINGTERVVVSQLVRSPGAYFERTADKTSDKDIFTAKIIPSRGAWFELEIDKRDQVGVRLDRKRKQSVTVLLKALGWTESQILEEFGEFDSIRATLEKDGTSTREDALLDIYRKLRPGEPPTVEAAQTLLDNLYFNPKRYDLAKVGRYKINRKLGIDKSLASPDASVLDINDIVAIIKFLVTLHAGGKSLTAKRDGKDFELRVDVDDIDHFGNRRIRAVGELIENQVRTGLSRMERVVRERMTTQDVEAITPQTLINIRPVVAAIKEFFGTSQLSQFMDQNNPLAGLTHKRRLSALGPGGLSRDRAGYEVRDVHPSHYGRMCPIETPEGPNIGLIGSLASYGRINPLGFIETPYRKVSKGHVSDEVDYLTADDELNYIIAQANAPLDSKSSFVEDQVLVRQRGGGGEPVLVAADDVEYMDVSPRQMVSVATALIPFLEHDDANRALMGANMQRQAVPLVRSEAPVVGTGMERAAAVDAGDVVIAKKAGVVTEVSADLVIMLNDDGTETNYRIAKYNRSNQGTAYNQRVLVSEGARLEVGGIIADGPATDQGELALGKNLLVAFMSWEGHNFEDAIILSQRLVSEDVLSSIHIEEHEIDARDTKLGAEEITRDIPNVSEEILAGLDERGIIHIGAEVDAGDILVGKVTPKGETELTPEERLLRAIFGDKSGEVRDTSLKVPHGESGTVIGVRFFDRENDDDLAPGVNQLVRIYVAAKRKITNGDKLAGRHGNKGVISKILPIEDMPFLADGTPVDIVLNPLGVPGRMNVGQVLELHLGWIAKTGWKIDGEPDWVKNLPNLPRETGRDQILATPVFDGAREEEISGLLDSTNVTRDGDLLINRSGKTRLFDGRSGEPFPDPISVGYMYILKLHHLVDDKIHARSTGPYSMITQQPLGGKAQFGGQRFGEMEVWALEAYGAAYTLQELLTIKSDDIHGRVKVYEAIVKGENIPEPGIPESFKVLIKEMRSLCLNVEVLSTEGSTIEMRDSDEEVFRAAEELGIDLSRAEPNSVEEV</sequence>
<organism>
    <name type="scientific">Renibacterium salmoninarum (strain ATCC 33209 / DSM 20767 / JCM 11484 / NBRC 15589 / NCIMB 2235)</name>
    <dbReference type="NCBI Taxonomy" id="288705"/>
    <lineage>
        <taxon>Bacteria</taxon>
        <taxon>Bacillati</taxon>
        <taxon>Actinomycetota</taxon>
        <taxon>Actinomycetes</taxon>
        <taxon>Micrococcales</taxon>
        <taxon>Micrococcaceae</taxon>
        <taxon>Renibacterium</taxon>
    </lineage>
</organism>
<protein>
    <recommendedName>
        <fullName evidence="1">DNA-directed RNA polymerase subunit beta</fullName>
        <shortName evidence="1">RNAP subunit beta</shortName>
        <ecNumber evidence="1">2.7.7.6</ecNumber>
    </recommendedName>
    <alternativeName>
        <fullName evidence="1">RNA polymerase subunit beta</fullName>
    </alternativeName>
    <alternativeName>
        <fullName evidence="1">Transcriptase subunit beta</fullName>
    </alternativeName>
</protein>
<feature type="chain" id="PRO_1000086378" description="DNA-directed RNA polymerase subunit beta">
    <location>
        <begin position="1"/>
        <end position="1175"/>
    </location>
</feature>
<feature type="region of interest" description="Disordered" evidence="2">
    <location>
        <begin position="1"/>
        <end position="24"/>
    </location>
</feature>
<feature type="compositionally biased region" description="Low complexity" evidence="2">
    <location>
        <begin position="7"/>
        <end position="23"/>
    </location>
</feature>
<evidence type="ECO:0000255" key="1">
    <source>
        <dbReference type="HAMAP-Rule" id="MF_01321"/>
    </source>
</evidence>
<evidence type="ECO:0000256" key="2">
    <source>
        <dbReference type="SAM" id="MobiDB-lite"/>
    </source>
</evidence>
<reference key="1">
    <citation type="journal article" date="2008" name="J. Bacteriol.">
        <title>Genome sequence of the fish pathogen Renibacterium salmoninarum suggests reductive evolution away from an environmental Arthrobacter ancestor.</title>
        <authorList>
            <person name="Wiens G.D."/>
            <person name="Rockey D.D."/>
            <person name="Wu Z."/>
            <person name="Chang J."/>
            <person name="Levy R."/>
            <person name="Crane S."/>
            <person name="Chen D.S."/>
            <person name="Capri G.R."/>
            <person name="Burnett J.R."/>
            <person name="Sudheesh P.S."/>
            <person name="Schipma M.J."/>
            <person name="Burd H."/>
            <person name="Bhattacharyya A."/>
            <person name="Rhodes L.D."/>
            <person name="Kaul R."/>
            <person name="Strom M.S."/>
        </authorList>
    </citation>
    <scope>NUCLEOTIDE SEQUENCE [LARGE SCALE GENOMIC DNA]</scope>
    <source>
        <strain>ATCC 33209 / DSM 20767 / JCM 11484 / NBRC 15589 / NCIMB 2235</strain>
    </source>
</reference>
<dbReference type="EC" id="2.7.7.6" evidence="1"/>
<dbReference type="EMBL" id="CP000910">
    <property type="protein sequence ID" value="ABY23918.1"/>
    <property type="molecule type" value="Genomic_DNA"/>
</dbReference>
<dbReference type="SMR" id="A9WSY0"/>
<dbReference type="STRING" id="288705.RSal33209_2186"/>
<dbReference type="KEGG" id="rsa:RSal33209_2186"/>
<dbReference type="eggNOG" id="COG0085">
    <property type="taxonomic scope" value="Bacteria"/>
</dbReference>
<dbReference type="HOGENOM" id="CLU_000524_4_1_11"/>
<dbReference type="Proteomes" id="UP000002007">
    <property type="component" value="Chromosome"/>
</dbReference>
<dbReference type="GO" id="GO:0000428">
    <property type="term" value="C:DNA-directed RNA polymerase complex"/>
    <property type="evidence" value="ECO:0007669"/>
    <property type="project" value="UniProtKB-KW"/>
</dbReference>
<dbReference type="GO" id="GO:0003677">
    <property type="term" value="F:DNA binding"/>
    <property type="evidence" value="ECO:0007669"/>
    <property type="project" value="UniProtKB-UniRule"/>
</dbReference>
<dbReference type="GO" id="GO:0003899">
    <property type="term" value="F:DNA-directed RNA polymerase activity"/>
    <property type="evidence" value="ECO:0007669"/>
    <property type="project" value="UniProtKB-UniRule"/>
</dbReference>
<dbReference type="GO" id="GO:0032549">
    <property type="term" value="F:ribonucleoside binding"/>
    <property type="evidence" value="ECO:0007669"/>
    <property type="project" value="InterPro"/>
</dbReference>
<dbReference type="GO" id="GO:0006351">
    <property type="term" value="P:DNA-templated transcription"/>
    <property type="evidence" value="ECO:0007669"/>
    <property type="project" value="UniProtKB-UniRule"/>
</dbReference>
<dbReference type="CDD" id="cd00653">
    <property type="entry name" value="RNA_pol_B_RPB2"/>
    <property type="match status" value="1"/>
</dbReference>
<dbReference type="FunFam" id="3.90.1800.10:FF:000001">
    <property type="entry name" value="DNA-directed RNA polymerase subunit beta"/>
    <property type="match status" value="1"/>
</dbReference>
<dbReference type="Gene3D" id="2.40.50.100">
    <property type="match status" value="1"/>
</dbReference>
<dbReference type="Gene3D" id="2.40.50.150">
    <property type="match status" value="1"/>
</dbReference>
<dbReference type="Gene3D" id="3.90.1100.10">
    <property type="match status" value="1"/>
</dbReference>
<dbReference type="Gene3D" id="2.30.150.10">
    <property type="entry name" value="DNA-directed RNA polymerase, beta subunit, external 1 domain"/>
    <property type="match status" value="1"/>
</dbReference>
<dbReference type="Gene3D" id="2.40.270.10">
    <property type="entry name" value="DNA-directed RNA polymerase, subunit 2, domain 6"/>
    <property type="match status" value="1"/>
</dbReference>
<dbReference type="Gene3D" id="3.90.1800.10">
    <property type="entry name" value="RNA polymerase alpha subunit dimerisation domain"/>
    <property type="match status" value="1"/>
</dbReference>
<dbReference type="Gene3D" id="3.90.1110.10">
    <property type="entry name" value="RNA polymerase Rpb2, domain 2"/>
    <property type="match status" value="1"/>
</dbReference>
<dbReference type="HAMAP" id="MF_01321">
    <property type="entry name" value="RNApol_bact_RpoB"/>
    <property type="match status" value="1"/>
</dbReference>
<dbReference type="InterPro" id="IPR042107">
    <property type="entry name" value="DNA-dir_RNA_pol_bsu_ext_1_sf"/>
</dbReference>
<dbReference type="InterPro" id="IPR019462">
    <property type="entry name" value="DNA-dir_RNA_pol_bsu_external_1"/>
</dbReference>
<dbReference type="InterPro" id="IPR015712">
    <property type="entry name" value="DNA-dir_RNA_pol_su2"/>
</dbReference>
<dbReference type="InterPro" id="IPR007120">
    <property type="entry name" value="DNA-dir_RNAP_su2_dom"/>
</dbReference>
<dbReference type="InterPro" id="IPR037033">
    <property type="entry name" value="DNA-dir_RNAP_su2_hyb_sf"/>
</dbReference>
<dbReference type="InterPro" id="IPR010243">
    <property type="entry name" value="RNA_pol_bsu_bac"/>
</dbReference>
<dbReference type="InterPro" id="IPR007121">
    <property type="entry name" value="RNA_pol_bsu_CS"/>
</dbReference>
<dbReference type="InterPro" id="IPR007644">
    <property type="entry name" value="RNA_pol_bsu_protrusion"/>
</dbReference>
<dbReference type="InterPro" id="IPR007642">
    <property type="entry name" value="RNA_pol_Rpb2_2"/>
</dbReference>
<dbReference type="InterPro" id="IPR037034">
    <property type="entry name" value="RNA_pol_Rpb2_2_sf"/>
</dbReference>
<dbReference type="InterPro" id="IPR007645">
    <property type="entry name" value="RNA_pol_Rpb2_3"/>
</dbReference>
<dbReference type="InterPro" id="IPR007641">
    <property type="entry name" value="RNA_pol_Rpb2_7"/>
</dbReference>
<dbReference type="InterPro" id="IPR014724">
    <property type="entry name" value="RNA_pol_RPB2_OB-fold"/>
</dbReference>
<dbReference type="NCBIfam" id="NF001616">
    <property type="entry name" value="PRK00405.1"/>
    <property type="match status" value="1"/>
</dbReference>
<dbReference type="NCBIfam" id="TIGR02013">
    <property type="entry name" value="rpoB"/>
    <property type="match status" value="1"/>
</dbReference>
<dbReference type="PANTHER" id="PTHR20856">
    <property type="entry name" value="DNA-DIRECTED RNA POLYMERASE I SUBUNIT 2"/>
    <property type="match status" value="1"/>
</dbReference>
<dbReference type="Pfam" id="PF04563">
    <property type="entry name" value="RNA_pol_Rpb2_1"/>
    <property type="match status" value="1"/>
</dbReference>
<dbReference type="Pfam" id="PF04561">
    <property type="entry name" value="RNA_pol_Rpb2_2"/>
    <property type="match status" value="1"/>
</dbReference>
<dbReference type="Pfam" id="PF04565">
    <property type="entry name" value="RNA_pol_Rpb2_3"/>
    <property type="match status" value="1"/>
</dbReference>
<dbReference type="Pfam" id="PF10385">
    <property type="entry name" value="RNA_pol_Rpb2_45"/>
    <property type="match status" value="1"/>
</dbReference>
<dbReference type="Pfam" id="PF00562">
    <property type="entry name" value="RNA_pol_Rpb2_6"/>
    <property type="match status" value="1"/>
</dbReference>
<dbReference type="Pfam" id="PF04560">
    <property type="entry name" value="RNA_pol_Rpb2_7"/>
    <property type="match status" value="1"/>
</dbReference>
<dbReference type="SUPFAM" id="SSF64484">
    <property type="entry name" value="beta and beta-prime subunits of DNA dependent RNA-polymerase"/>
    <property type="match status" value="1"/>
</dbReference>
<dbReference type="PROSITE" id="PS01166">
    <property type="entry name" value="RNA_POL_BETA"/>
    <property type="match status" value="1"/>
</dbReference>
<proteinExistence type="inferred from homology"/>
<comment type="function">
    <text evidence="1">DNA-dependent RNA polymerase catalyzes the transcription of DNA into RNA using the four ribonucleoside triphosphates as substrates.</text>
</comment>
<comment type="catalytic activity">
    <reaction evidence="1">
        <text>RNA(n) + a ribonucleoside 5'-triphosphate = RNA(n+1) + diphosphate</text>
        <dbReference type="Rhea" id="RHEA:21248"/>
        <dbReference type="Rhea" id="RHEA-COMP:14527"/>
        <dbReference type="Rhea" id="RHEA-COMP:17342"/>
        <dbReference type="ChEBI" id="CHEBI:33019"/>
        <dbReference type="ChEBI" id="CHEBI:61557"/>
        <dbReference type="ChEBI" id="CHEBI:140395"/>
        <dbReference type="EC" id="2.7.7.6"/>
    </reaction>
</comment>
<comment type="subunit">
    <text evidence="1">The RNAP catalytic core consists of 2 alpha, 1 beta, 1 beta' and 1 omega subunit. When a sigma factor is associated with the core the holoenzyme is formed, which can initiate transcription.</text>
</comment>
<comment type="similarity">
    <text evidence="1">Belongs to the RNA polymerase beta chain family.</text>
</comment>
<name>RPOB_RENSM</name>
<accession>A9WSY0</accession>